<protein>
    <recommendedName>
        <fullName>A-kinase anchor protein 13</fullName>
        <shortName>AKAP-13</shortName>
    </recommendedName>
    <alternativeName>
        <fullName evidence="18">AKAP-Lbc</fullName>
    </alternativeName>
</protein>
<sequence>MKLSPQQAPLYGDCVVTVLLAEEDKVEDDAIFYLIFSGSTLYHCTSTRKVSSDTLETIAPGHDCCETVKVLLCASREGLPVFVVAEEDFHFVQDEAYDAAQFLATSAGNQQALNFTRFLDRSGPPSRDVNSLDEKVALAFRHLKLPAEWNVLGTDHTLHDGGPRETLMHFAVRLGLLRLTWFLLQKPGGRGALSIHNKEGATPVSLALERGYHELHQLLTEENAGEPDSWSSLSYEIPYGDCSVRHHRELDIYTLTSESESHREPHGDSCTGHISKLMNIQQQLMKTNLKQMDNLMPLMVTAQDSSCVPSVPETDGLFLPCVPEPSDHQHPPFEETKSTLCCQRSPGRMAESSCDLSSMVEEENVICSHKKNKDVGRKGEEAEPASAMDSGSASHQDSCLQSVPDCGVKGREGLPSCGNRNEVTGTNYSGVATCQQPLSSRSSVLQDAMVTEPDACQHSSGRELPDSSSTDVGAPEKAGELEHSLLTPDATTQNNKPQVGEGTKERLENSDSSTTETTAVQVLSEPMEKADITNHVFATSAVGVNTPAEASPALSSEEIPTEKPGMETQERGCEGGTTSDQSSPVLPAAAIENKVLGGQEPDTSIAGFCKTASPLDLTMPGPSSDGMPEQNSESHARPAQSLSGQALLCSTAEAGTPSAEATHQPSTVTSSGRLEECGSGKASLPESTMVQPSTQELCTTLCPEDPQADTVTSDTVKNTQKSVGVCHLCVSDAKNQGNGLKQDTPLTNVLEDVPRLPSVVSQTEKELAPDQVSPPASSFSLASSPESESVTKDDALSLVPSQKEKGTATPQLHRTTACRDGPDGRDLSDTDKVGDGATDPPPSSAVELRTSMGNTSPVGIGGEQEGSSPTATLEVLSDSLLHNVDKAALVSDFTLPEEGVSVVVPESSTALGQDGKDRAMSCSSVKEDVHSSEMSREDQRTPPSGQEIPGLCEKPMSALCAEEKAQQHTPSACLKTETKDIKEVAPQVSLLTEGGAAKSLVPPRTSLSADSKQKASSTEQSGSSLLPSGLPGASEALHCNQPSALDVVVENTQFQGETNACEVSRSAMEDVTVADASPATAEPRKKDASHCIKDIPISELLNQEKQMTPSLPEAFLDKGVTDLQEVITPEIEPLDCKRETLEGTDLNCATSNSKETPIEKPMQPLARDLPTETGLSVINNNVPQADMKQVAQASIPAEESNATTVSTQAADVPTRADSIEETATRIVEAVIRQVRASNALMAKVETQNPSLSSPETKQLENAYTESACAFLPGETPQIEKTHEDTTGQCGAETEEPEKIILPESAPGKQGKMPDTRTGDEVDLLSRISAASEEEAVGNGAATPKMKQGPGTQAINRESWCAIEPCPEAASLLASKQSSECRSFIDVGLGTECASKEGMLQRVSGSESDLFHSPSDEMDSIIFPKPEEEQLLCDTTGSSSSTDDTASLDRHSSHGSDVSLPQTSKLNRSRNHQSANGFFSPGVEAPESRESESEPAGSGEMEEEEMDSITEVPANCSFLRSSMRSLSPFRRHSWGPGKNAASDAEMNQRSSMRALGHVVRRPPIHRRSFSLEGLTGGGVGNKPSSSLEMSSANSSELRNPFGGEEQRNSLMSLSEEHLEPDQRQHHRMFDQQTCYRSKQQGFNYCTSAISSPLTKSISLMTISHPGLDSSRPFHSTSANLTESITEENCNFLPPSPSKKNFEEKSGTKVSRTFSYIRNKMSSSKKSKEKEKEKDKIKEKEKDSKEKEKDKKTLNGHTFSPIPIVGPISCSQCMKPFTNKDAYTCAGCGAFVHKGCRENLASCAKVKMKQPKGSLQAHDTSSLPTVIMRNKSSQPKERPRSAVLLADEATAAPMFTNRRSQQSVSLSKSVSIQNITGVGNDENMSNTWKFLSHSTDSLNKICKVNESTESLTDEGVGTDMNEGQLMGDFESDSKQLEAESWSRTVDSKFLKQQKKDVVKRQEVIYELMQTELHHIRTLKIMSDVYSRGMMTDLLFEQQMVEKLFPCLDELISIHSQFFQRILERKKESLVDKSEKNFLIKRIGDVLVSQFSGESAERLKKTYGKFCGQHNQSVNYFKDLYTKDKRFQAFVKKKMSSSVVRRLGIPECILLVTQRITKYPVLFQRILQCTKDNEVEQEDLTQSLSLVKDVIGAVDSKVASYEKKVRLGEIYTKTDSKSIMRMKSGQMFAKEDLRRKKLVRDGSVFLKSTTGRLKEVQAVLLTDILVFLQEKDQKYVFASLDHKSTVISLKKLIVREVAHEEKGLFLISMGVKDPEMVEVHASSREERNSWIQIIQDTINSLNRDEDEGIPSENEEEKKLLDTKARELKEQLQQKDQQILLLLEEKEMIFRDMTECSTPLPEDCSPTHSPRVLFRSNTEEALKGGPLMKSAINEVEILQSLVSGSLGGTLGQSISSPVEQEVMAAPISLPRRAETFGGFDCHQMNASKGGEKEEGDDGQDLRRTESDSGLKKGGNGNLVFMLKRNSEQVVQSIVHLHELLSMLQGVVLQQDSYIEDQKLVLTEKVLTRSASRPSSLIEQEKQRSLEKQRQDLANLQKQQAQHLEEKRRREREWEAREQELRDREAKLAEREETVRRRQQDLERDREELQQKKGTYQCDLERLRAAQKQLEREQEQLRRDTERLSQRQMDQNLCQVSNKHGRLMRIPSFLPNSDEFSSPSAPSVTKSGSLDSELSVSPKRNSISRTQKDKGPFHILGSASQTKVPEGQSQAPSSTSTSTRLFGLSKPKEKKEKKKKSKGSRTQPGDGPASEVPAEGEEIFC</sequence>
<gene>
    <name evidence="20" type="primary">Akap13</name>
    <name evidence="17" type="synonym">Brx</name>
</gene>
<reference evidence="21" key="1">
    <citation type="journal article" date="2009" name="PLoS Biol.">
        <title>Lineage-specific biology revealed by a finished genome assembly of the mouse.</title>
        <authorList>
            <person name="Church D.M."/>
            <person name="Goodstadt L."/>
            <person name="Hillier L.W."/>
            <person name="Zody M.C."/>
            <person name="Goldstein S."/>
            <person name="She X."/>
            <person name="Bult C.J."/>
            <person name="Agarwala R."/>
            <person name="Cherry J.L."/>
            <person name="DiCuccio M."/>
            <person name="Hlavina W."/>
            <person name="Kapustin Y."/>
            <person name="Meric P."/>
            <person name="Maglott D."/>
            <person name="Birtle Z."/>
            <person name="Marques A.C."/>
            <person name="Graves T."/>
            <person name="Zhou S."/>
            <person name="Teague B."/>
            <person name="Potamousis K."/>
            <person name="Churas C."/>
            <person name="Place M."/>
            <person name="Herschleb J."/>
            <person name="Runnheim R."/>
            <person name="Forrest D."/>
            <person name="Amos-Landgraf J."/>
            <person name="Schwartz D.C."/>
            <person name="Cheng Z."/>
            <person name="Lindblad-Toh K."/>
            <person name="Eichler E.E."/>
            <person name="Ponting C.P."/>
        </authorList>
    </citation>
    <scope>NUCLEOTIDE SEQUENCE [LARGE SCALE GENOMIC DNA]</scope>
    <source>
        <strain evidence="21">C57BL/6J</strain>
    </source>
</reference>
<reference key="2">
    <citation type="journal article" date="2005" name="Science">
        <title>The transcriptional landscape of the mammalian genome.</title>
        <authorList>
            <person name="Carninci P."/>
            <person name="Kasukawa T."/>
            <person name="Katayama S."/>
            <person name="Gough J."/>
            <person name="Frith M.C."/>
            <person name="Maeda N."/>
            <person name="Oyama R."/>
            <person name="Ravasi T."/>
            <person name="Lenhard B."/>
            <person name="Wells C."/>
            <person name="Kodzius R."/>
            <person name="Shimokawa K."/>
            <person name="Bajic V.B."/>
            <person name="Brenner S.E."/>
            <person name="Batalov S."/>
            <person name="Forrest A.R."/>
            <person name="Zavolan M."/>
            <person name="Davis M.J."/>
            <person name="Wilming L.G."/>
            <person name="Aidinis V."/>
            <person name="Allen J.E."/>
            <person name="Ambesi-Impiombato A."/>
            <person name="Apweiler R."/>
            <person name="Aturaliya R.N."/>
            <person name="Bailey T.L."/>
            <person name="Bansal M."/>
            <person name="Baxter L."/>
            <person name="Beisel K.W."/>
            <person name="Bersano T."/>
            <person name="Bono H."/>
            <person name="Chalk A.M."/>
            <person name="Chiu K.P."/>
            <person name="Choudhary V."/>
            <person name="Christoffels A."/>
            <person name="Clutterbuck D.R."/>
            <person name="Crowe M.L."/>
            <person name="Dalla E."/>
            <person name="Dalrymple B.P."/>
            <person name="de Bono B."/>
            <person name="Della Gatta G."/>
            <person name="di Bernardo D."/>
            <person name="Down T."/>
            <person name="Engstrom P."/>
            <person name="Fagiolini M."/>
            <person name="Faulkner G."/>
            <person name="Fletcher C.F."/>
            <person name="Fukushima T."/>
            <person name="Furuno M."/>
            <person name="Futaki S."/>
            <person name="Gariboldi M."/>
            <person name="Georgii-Hemming P."/>
            <person name="Gingeras T.R."/>
            <person name="Gojobori T."/>
            <person name="Green R.E."/>
            <person name="Gustincich S."/>
            <person name="Harbers M."/>
            <person name="Hayashi Y."/>
            <person name="Hensch T.K."/>
            <person name="Hirokawa N."/>
            <person name="Hill D."/>
            <person name="Huminiecki L."/>
            <person name="Iacono M."/>
            <person name="Ikeo K."/>
            <person name="Iwama A."/>
            <person name="Ishikawa T."/>
            <person name="Jakt M."/>
            <person name="Kanapin A."/>
            <person name="Katoh M."/>
            <person name="Kawasawa Y."/>
            <person name="Kelso J."/>
            <person name="Kitamura H."/>
            <person name="Kitano H."/>
            <person name="Kollias G."/>
            <person name="Krishnan S.P."/>
            <person name="Kruger A."/>
            <person name="Kummerfeld S.K."/>
            <person name="Kurochkin I.V."/>
            <person name="Lareau L.F."/>
            <person name="Lazarevic D."/>
            <person name="Lipovich L."/>
            <person name="Liu J."/>
            <person name="Liuni S."/>
            <person name="McWilliam S."/>
            <person name="Madan Babu M."/>
            <person name="Madera M."/>
            <person name="Marchionni L."/>
            <person name="Matsuda H."/>
            <person name="Matsuzawa S."/>
            <person name="Miki H."/>
            <person name="Mignone F."/>
            <person name="Miyake S."/>
            <person name="Morris K."/>
            <person name="Mottagui-Tabar S."/>
            <person name="Mulder N."/>
            <person name="Nakano N."/>
            <person name="Nakauchi H."/>
            <person name="Ng P."/>
            <person name="Nilsson R."/>
            <person name="Nishiguchi S."/>
            <person name="Nishikawa S."/>
            <person name="Nori F."/>
            <person name="Ohara O."/>
            <person name="Okazaki Y."/>
            <person name="Orlando V."/>
            <person name="Pang K.C."/>
            <person name="Pavan W.J."/>
            <person name="Pavesi G."/>
            <person name="Pesole G."/>
            <person name="Petrovsky N."/>
            <person name="Piazza S."/>
            <person name="Reed J."/>
            <person name="Reid J.F."/>
            <person name="Ring B.Z."/>
            <person name="Ringwald M."/>
            <person name="Rost B."/>
            <person name="Ruan Y."/>
            <person name="Salzberg S.L."/>
            <person name="Sandelin A."/>
            <person name="Schneider C."/>
            <person name="Schoenbach C."/>
            <person name="Sekiguchi K."/>
            <person name="Semple C.A."/>
            <person name="Seno S."/>
            <person name="Sessa L."/>
            <person name="Sheng Y."/>
            <person name="Shibata Y."/>
            <person name="Shimada H."/>
            <person name="Shimada K."/>
            <person name="Silva D."/>
            <person name="Sinclair B."/>
            <person name="Sperling S."/>
            <person name="Stupka E."/>
            <person name="Sugiura K."/>
            <person name="Sultana R."/>
            <person name="Takenaka Y."/>
            <person name="Taki K."/>
            <person name="Tammoja K."/>
            <person name="Tan S.L."/>
            <person name="Tang S."/>
            <person name="Taylor M.S."/>
            <person name="Tegner J."/>
            <person name="Teichmann S.A."/>
            <person name="Ueda H.R."/>
            <person name="van Nimwegen E."/>
            <person name="Verardo R."/>
            <person name="Wei C.L."/>
            <person name="Yagi K."/>
            <person name="Yamanishi H."/>
            <person name="Zabarovsky E."/>
            <person name="Zhu S."/>
            <person name="Zimmer A."/>
            <person name="Hide W."/>
            <person name="Bult C."/>
            <person name="Grimmond S.M."/>
            <person name="Teasdale R.D."/>
            <person name="Liu E.T."/>
            <person name="Brusic V."/>
            <person name="Quackenbush J."/>
            <person name="Wahlestedt C."/>
            <person name="Mattick J.S."/>
            <person name="Hume D.A."/>
            <person name="Kai C."/>
            <person name="Sasaki D."/>
            <person name="Tomaru Y."/>
            <person name="Fukuda S."/>
            <person name="Kanamori-Katayama M."/>
            <person name="Suzuki M."/>
            <person name="Aoki J."/>
            <person name="Arakawa T."/>
            <person name="Iida J."/>
            <person name="Imamura K."/>
            <person name="Itoh M."/>
            <person name="Kato T."/>
            <person name="Kawaji H."/>
            <person name="Kawagashira N."/>
            <person name="Kawashima T."/>
            <person name="Kojima M."/>
            <person name="Kondo S."/>
            <person name="Konno H."/>
            <person name="Nakano K."/>
            <person name="Ninomiya N."/>
            <person name="Nishio T."/>
            <person name="Okada M."/>
            <person name="Plessy C."/>
            <person name="Shibata K."/>
            <person name="Shiraki T."/>
            <person name="Suzuki S."/>
            <person name="Tagami M."/>
            <person name="Waki K."/>
            <person name="Watahiki A."/>
            <person name="Okamura-Oho Y."/>
            <person name="Suzuki H."/>
            <person name="Kawai J."/>
            <person name="Hayashizaki Y."/>
        </authorList>
    </citation>
    <scope>NUCLEOTIDE SEQUENCE [LARGE SCALE MRNA] OF 804-1696 (ISOFORM 2)</scope>
    <source>
        <strain evidence="19">C57BL/6J</strain>
        <tissue evidence="19">Liver</tissue>
    </source>
</reference>
<reference key="3">
    <citation type="journal article" date="2006" name="J. Biol. Chem.">
        <title>Rho family Guanine nucleotide exchange factor Brx couples extracellular signals to the glucocorticoid signaling system.</title>
        <authorList>
            <person name="Kino T."/>
            <person name="Souvatzoglou E."/>
            <person name="Charmandari E."/>
            <person name="Ichijo T."/>
            <person name="Driggers P."/>
            <person name="Mayers C."/>
            <person name="Alatsatianos A."/>
            <person name="Manoli I."/>
            <person name="Westphal H."/>
            <person name="Chrousos G.P."/>
            <person name="Segars J.H."/>
        </authorList>
    </citation>
    <scope>DISRUPTION PHENOTYPE</scope>
</reference>
<reference key="4">
    <citation type="journal article" date="2007" name="Proc. Natl. Acad. Sci. U.S.A.">
        <title>The A-kinase anchoring protein (AKAP)-Lbc-signaling complex mediates alpha1 adrenergic receptor-induced cardiomyocyte hypertrophy.</title>
        <authorList>
            <person name="Appert-Collin A."/>
            <person name="Cotecchia S."/>
            <person name="Nenniger-Tosato M."/>
            <person name="Pedrazzini T."/>
            <person name="Diviani D."/>
        </authorList>
    </citation>
    <scope>FUNCTION</scope>
    <scope>INDUCTION BY PHENYLEPHRINE</scope>
</reference>
<reference key="5">
    <citation type="journal article" date="2007" name="Proc. Natl. Acad. Sci. U.S.A.">
        <title>Large-scale phosphorylation analysis of mouse liver.</title>
        <authorList>
            <person name="Villen J."/>
            <person name="Beausoleil S.A."/>
            <person name="Gerber S.A."/>
            <person name="Gygi S.P."/>
        </authorList>
    </citation>
    <scope>PHOSPHORYLATION [LARGE SCALE ANALYSIS] AT SER-1839 AND SER-2692</scope>
    <scope>IDENTIFICATION BY MASS SPECTROMETRY [LARGE SCALE ANALYSIS]</scope>
    <source>
        <tissue>Liver</tissue>
    </source>
</reference>
<reference key="6">
    <citation type="journal article" date="2009" name="Immunity">
        <title>The phagosomal proteome in interferon-gamma-activated macrophages.</title>
        <authorList>
            <person name="Trost M."/>
            <person name="English L."/>
            <person name="Lemieux S."/>
            <person name="Courcelles M."/>
            <person name="Desjardins M."/>
            <person name="Thibault P."/>
        </authorList>
    </citation>
    <scope>IDENTIFICATION BY MASS SPECTROMETRY [LARGE SCALE ANALYSIS]</scope>
</reference>
<reference key="7">
    <citation type="journal article" date="2010" name="Cell">
        <title>A tissue-specific atlas of mouse protein phosphorylation and expression.</title>
        <authorList>
            <person name="Huttlin E.L."/>
            <person name="Jedrychowski M.P."/>
            <person name="Elias J.E."/>
            <person name="Goswami T."/>
            <person name="Rad R."/>
            <person name="Beausoleil S.A."/>
            <person name="Villen J."/>
            <person name="Haas W."/>
            <person name="Sowa M.E."/>
            <person name="Gygi S.P."/>
        </authorList>
    </citation>
    <scope>PHOSPHORYLATION [LARGE SCALE ANALYSIS] AT THR-941; SER-1608; SER-1611; SER-1613; SER-1839; SER-1892; SER-1895; SER-2361; SER-2527; SER-2530 AND SER-2692</scope>
    <scope>IDENTIFICATION BY MASS SPECTROMETRY [LARGE SCALE ANALYSIS]</scope>
    <source>
        <tissue>Brain</tissue>
        <tissue>Brown adipose tissue</tissue>
        <tissue>Heart</tissue>
        <tissue>Kidney</tissue>
        <tissue>Liver</tissue>
        <tissue>Lung</tissue>
        <tissue>Pancreas</tissue>
        <tissue>Spleen</tissue>
        <tissue>Testis</tissue>
    </source>
</reference>
<reference key="8">
    <citation type="journal article" date="2010" name="J. Biol. Chem.">
        <title>The Rho guanine nucleotide exchange factor AKAP13 (BRX) is essential for cardiac development in mice.</title>
        <authorList>
            <person name="Mayers C.M."/>
            <person name="Wadell J."/>
            <person name="McLean K."/>
            <person name="Venere M."/>
            <person name="Malik M."/>
            <person name="Shibata T."/>
            <person name="Driggers P.H."/>
            <person name="Kino T."/>
            <person name="Guo X.C."/>
            <person name="Koide H."/>
            <person name="Gorivodsky M."/>
            <person name="Grinberg A."/>
            <person name="Mukhopadhyay M."/>
            <person name="Abu-Asab M."/>
            <person name="Westphal H."/>
            <person name="Segars J.H."/>
        </authorList>
    </citation>
    <scope>DISRUPTION PHENOTYPE</scope>
    <scope>FUNCTION</scope>
    <scope>SUBCELLULAR LOCATION</scope>
    <scope>INTERACTION WITH MEF2C AND RXRB</scope>
    <scope>TISSUE SPECIFICITY</scope>
</reference>
<reference key="9">
    <citation type="journal article" date="2010" name="Nat. Cell Biol.">
        <title>AKAP-Lbc enhances cyclic AMP control of the ERK1/2 cascade.</title>
        <authorList>
            <person name="Smith F.D."/>
            <person name="Langeberg L.K."/>
            <person name="Cellurale C."/>
            <person name="Pawson T."/>
            <person name="Morrison D.K."/>
            <person name="Davis R.J."/>
            <person name="Scott J.D."/>
        </authorList>
    </citation>
    <scope>INTERACTION WITH KSR1; BRAF; PKA AND PRKAR2A</scope>
</reference>
<reference key="10">
    <citation type="journal article" date="2013" name="Mol. Cell. Biol.">
        <title>A-kinase-anchoring protein-Lbc anchors IkappaB kinase beta to support interleukin-6-mediated cardiomyocyte hypertrophy.</title>
        <authorList>
            <person name="del Vescovo C.D."/>
            <person name="Cotecchia S."/>
            <person name="Diviani D."/>
        </authorList>
    </citation>
    <scope>INTERACTION WITH IKBKB</scope>
</reference>
<reference key="11">
    <citation type="journal article" date="2013" name="PLoS ONE">
        <title>AKAP13 Rho-GEF and PKD-binding domain deficient mice develop normally but have an abnormal response to beta-adrenergic-induced cardiac hypertrophy.</title>
        <authorList>
            <person name="Spindler M.J."/>
            <person name="Burmeister B.T."/>
            <person name="Huang Y."/>
            <person name="Hsiao E.C."/>
            <person name="Salomonis N."/>
            <person name="Scott M.J."/>
            <person name="Srivastava D."/>
            <person name="Carnegie G.K."/>
            <person name="Conklin B.R."/>
        </authorList>
    </citation>
    <scope>RETRACTED PAPER</scope>
</reference>
<reference key="12">
    <citation type="journal article" date="2023" name="PLoS ONE">
        <title>Retraction: AKAP13 Rho-GEF and PKD-Binding Domain Deficient Mice Develop Normally but Have an Abnormal Response to beta-Adrenergic-Induced Cardiac Hypertrophy.</title>
        <authorList>
            <consortium name="PLOS ONE Editors"/>
        </authorList>
    </citation>
    <scope>RETRACTION NOTICE OF PUBMED:23658642</scope>
</reference>
<reference key="13">
    <citation type="journal article" date="2014" name="J. Mol. Cell. Cardiol.">
        <title>The C-terminus of the long AKAP13 isoform (AKAP-Lbc) is critical for development of compensatory cardiac hypertrophy.</title>
        <authorList>
            <person name="Taglieri D.M."/>
            <person name="Johnson K.R."/>
            <person name="Burmeister B.T."/>
            <person name="Monasky M.M."/>
            <person name="Spindler M.J."/>
            <person name="DeSantiago J."/>
            <person name="Banach K."/>
            <person name="Conklin B.R."/>
            <person name="Carnegie G.K."/>
        </authorList>
    </citation>
    <scope>FUNCTION</scope>
    <scope>INTERACTION WITH PRKD1 AND PKA</scope>
</reference>
<reference key="14">
    <citation type="journal article" date="2015" name="J. Bone Miner. Res.">
        <title>Mice deficient in AKAP13 (BRX) are osteoporotic and have impaired osteogenesis.</title>
        <authorList>
            <person name="Koide H."/>
            <person name="Holmbeck K."/>
            <person name="Lui J.C."/>
            <person name="Guo X.C."/>
            <person name="Driggers P."/>
            <person name="Chu T."/>
            <person name="Tatsuno I."/>
            <person name="Quaglieri C."/>
            <person name="Kino T."/>
            <person name="Baron J."/>
            <person name="Young M.F."/>
            <person name="Robey P.G."/>
            <person name="Segars J.H."/>
        </authorList>
    </citation>
    <scope>FUNCTION</scope>
    <scope>DISRUPTION PHENOTYPE</scope>
    <scope>TISSUE SPECIFICITY</scope>
</reference>
<comment type="function">
    <text evidence="2 9 10 14 15">Scaffold protein that plays an important role in assembling signaling complexes downstream of several types of G protein-coupled receptors. Activates RHOA in response to signaling via G protein-coupled receptors via its function as Rho guanine nucleotide exchange factor. May also activate other Rho family members (By similarity). Part of a kinase signaling complex that links ADRA1A and ADRA1B adrenergic receptor signaling to the activation of downstream p38 MAP kinases, such as MAPK11 and MAPK14. Part of a signaling complex that links ADRA1B signaling to the activation of RHOA and IKBKB/IKKB, leading to increased NF-kappa-B transcriptional activity. Part of a RHOA-dependent signaling cascade that mediates responses to lysophosphatidic acid (LPA), a signaling molecule that activates G-protein coupled receptors and potentiates transcriptional activation of the glucocorticoid receptor NR3C1 (By similarity). Part of a signaling cascade that stimulates MEF2C-dependent gene expression in response to lysophosphatidic acid (LPA) (By similarity). Part of a signaling pathway that activates MAPK11 and/or MAPK14 and leads to increased transcription activation of the estrogen receptors ESR1 and ESR2. Part of a signaling cascade that links cAMP and EGFR signaling to BRAF signaling and to PKA-mediated phosphorylation of KSR1, leading to the activation of downstream MAP kinases, such as MAPK1 or MAPK3 (By similarity). Functions as a scaffold protein that anchors cAMP-dependent protein kinase (PKA) and PRKD1. This promotes activation of PRKD1, leading to increased phosphorylation of HDAC5 and ultimately cardiomyocyte hypertrophy (PubMed:24161911). Has no guanine nucleotide exchange activity on CDC42, Ras or Rac (By similarity). Required for normal embryonic heart development, and in particular for normal sarcomere formation in the developing cardiomyocytes (PubMed:20139090). Plays a role in cardiomyocyte growth and cardiac hypertrophy in response to activation of the beta-adrenergic receptor by phenylephrine or isoproterenol (PubMed:24161911). Required for normal adaptive cardiac hypertrophy in response to pressure overload (PubMed:17537920, PubMed:24161911). Plays a role in osteogenesis (PubMed:25892096).</text>
</comment>
<comment type="subunit">
    <text evidence="2 10 11 12 14">Interacts with the cAMP-dependent protein kinase (PKA) holoenzyme and with the regulatory subunit PRKAR2A (PubMed:21102438, PubMed:24161911). Interacts with RHOA. Also interacts with RHOB and RHOC. Identified in a ternary complex with RHOA and PRKAR2A. Identified in a complex with NR3C1 and RHOA (By similarity). Interacts with BRAF and KSR1. Identified in a complex with BRAF and KSR1 (PubMed:21102438). Component of a signaling complex containing at least AKAP13, PKN1, MAPK14, ZAK and MAP2K3. Within this complex, AKAP13 interacts directly with PKN1, which in turn recruits MAPK14, MAP2K3 and ZAK. Interacts (phosphorylated form) with YWHAB and YWHAZ. Interaction with YWHAB inhibits activation of RHOA, interferes with PKN1 binding and activation of MAP kinases. Interacts with GNA12 (By similarity). Interacts with IKBKB (PubMed:23090968). Interacts with ESR1, THRA, PPARA and NME2 (By similarity). Interacts (via the C-terminal domain after the PH domain) with MEF2C and RXRB (PubMed:20139090). Interacts (via the C-terminal domain after the PH domain) with PRKD1 (PubMed:24161911).</text>
</comment>
<comment type="subcellular location">
    <subcellularLocation>
        <location evidence="2">Cytoplasm</location>
        <location evidence="2">Cytosol</location>
    </subcellularLocation>
    <subcellularLocation>
        <location evidence="2">Cytoplasm</location>
    </subcellularLocation>
    <subcellularLocation>
        <location evidence="2">Cytoplasm</location>
        <location evidence="2">Cell cortex</location>
    </subcellularLocation>
    <subcellularLocation>
        <location evidence="10">Cytoplasm</location>
        <location evidence="10">Cytoskeleton</location>
    </subcellularLocation>
    <subcellularLocation>
        <location evidence="2">Nucleus</location>
    </subcellularLocation>
    <subcellularLocation>
        <location evidence="2">Membrane</location>
        <topology evidence="2">Peripheral membrane protein</topology>
    </subcellularLocation>
    <text evidence="2 10">Colocalizes with actin and myosin filaments in developing cardiomyocytes (PubMed:20139090). Colocalizes with the actin cytoskeleton at the cell cortex (By similarity).</text>
</comment>
<comment type="alternative products">
    <event type="alternative splicing"/>
    <isoform>
        <id>E9Q394-1</id>
        <name>1</name>
        <sequence type="displayed"/>
    </isoform>
    <isoform>
        <id>E9Q394-2</id>
        <name>2</name>
        <sequence type="described" ref="VSP_058344 VSP_058345"/>
    </isoform>
</comment>
<comment type="tissue specificity">
    <text evidence="10 15">Detected in embryonic heart, limb bud, first branchial arch and forebrain (at protein level) (PubMed:20139090). Detected in heart (PubMed:20139090). Detected in perichondrium, but not in the bone growth plate (PubMed:25892096).</text>
</comment>
<comment type="induction">
    <text evidence="9">Up-regulated in the left heart ventricle in response to phenylephrine.</text>
</comment>
<comment type="domain">
    <text evidence="2">The DH domain is sufficient for interaction with RHOA, and for guanine nucleotide exchange (GEF) activity with RHOA. Forms that lack C-terminal regulatory domains have transforming activity and function as oncogenes.</text>
</comment>
<comment type="domain">
    <text evidence="2">The PH domain does not play a role in lipid-binding. Instead, it inhibits the guanine nucleotide exchange (GEF) activity of the isolated DH domain (in vitro).</text>
</comment>
<comment type="domain">
    <text evidence="14">The C-terminal domain after the PH domain is involved in protein-protein interactions that are required for normal, compensatory cardiac hypertrophy in response to pressure overload.</text>
</comment>
<comment type="disruption phenotype">
    <text evidence="8 10 15">Complete embryonic lethality (PubMed:16469733, PubMed:20139090). Mutant embryos are present at the expected Mendelian rate and develop normally up to 8 dpc. At 10 dpc, mutant embryos appear smaller, have an enlarged heart and pericardiac effusion. The myocardium is thinner than normal and has reduced trabeculation. Sarcomeres are abnormal with incompleteley formed myofilaments that end blindly and do not form Z-disks, indicating a defect in cardiomyocyte differentiation (PubMed:20139090). Heterozygous mice are born at the expected Mendelian frequency and appear grossly normal (PubMed:16469733, PubMed:20139090). Heterozygous mice display a blunted response to glucocorticoids (PubMed:16469733). Heterozygous mice display reduced bone volume relative to body size, but no change of bone length. Heterozygous mice display reduced bone mineral density and reduced trabecular bone, similar to osteoporotic bone. The number of osteoblasts in trabecular bone is reduced (PubMed:25892096).</text>
</comment>
<comment type="caution">
    <text evidence="13 16">An article confirming some elements of the function, the interaction with PKA and PRKD1 was finally retracted.</text>
</comment>
<name>AKP13_MOUSE</name>
<evidence type="ECO:0000250" key="1">
    <source>
        <dbReference type="UniProtKB" id="F1M3G7"/>
    </source>
</evidence>
<evidence type="ECO:0000250" key="2">
    <source>
        <dbReference type="UniProtKB" id="Q12802"/>
    </source>
</evidence>
<evidence type="ECO:0000255" key="3"/>
<evidence type="ECO:0000255" key="4">
    <source>
        <dbReference type="PROSITE-ProRule" id="PRU00062"/>
    </source>
</evidence>
<evidence type="ECO:0000255" key="5">
    <source>
        <dbReference type="PROSITE-ProRule" id="PRU00145"/>
    </source>
</evidence>
<evidence type="ECO:0000255" key="6">
    <source>
        <dbReference type="PROSITE-ProRule" id="PRU00226"/>
    </source>
</evidence>
<evidence type="ECO:0000256" key="7">
    <source>
        <dbReference type="SAM" id="MobiDB-lite"/>
    </source>
</evidence>
<evidence type="ECO:0000269" key="8">
    <source>
    </source>
</evidence>
<evidence type="ECO:0000269" key="9">
    <source>
    </source>
</evidence>
<evidence type="ECO:0000269" key="10">
    <source>
    </source>
</evidence>
<evidence type="ECO:0000269" key="11">
    <source>
    </source>
</evidence>
<evidence type="ECO:0000269" key="12">
    <source>
    </source>
</evidence>
<evidence type="ECO:0000269" key="13">
    <source>
    </source>
</evidence>
<evidence type="ECO:0000269" key="14">
    <source>
    </source>
</evidence>
<evidence type="ECO:0000269" key="15">
    <source>
    </source>
</evidence>
<evidence type="ECO:0000269" key="16">
    <source>
    </source>
</evidence>
<evidence type="ECO:0000303" key="17">
    <source>
    </source>
</evidence>
<evidence type="ECO:0000303" key="18">
    <source>
    </source>
</evidence>
<evidence type="ECO:0000312" key="19">
    <source>
        <dbReference type="EMBL" id="BAE28926.1"/>
    </source>
</evidence>
<evidence type="ECO:0000312" key="20">
    <source>
        <dbReference type="MGI" id="MGI:2676556"/>
    </source>
</evidence>
<evidence type="ECO:0000312" key="21">
    <source>
        <dbReference type="Proteomes" id="UP000000589"/>
    </source>
</evidence>
<evidence type="ECO:0007744" key="22">
    <source>
    </source>
</evidence>
<evidence type="ECO:0007744" key="23">
    <source>
    </source>
</evidence>
<feature type="chain" id="PRO_0000436319" description="A-kinase anchor protein 13">
    <location>
        <begin position="1"/>
        <end position="2776"/>
    </location>
</feature>
<feature type="domain" description="DH" evidence="4">
    <location>
        <begin position="1957"/>
        <end position="2154"/>
    </location>
</feature>
<feature type="domain" description="PH" evidence="5">
    <location>
        <begin position="2194"/>
        <end position="2296"/>
    </location>
</feature>
<feature type="zinc finger region" description="Phorbol-ester/DAG-type" evidence="6">
    <location>
        <begin position="1754"/>
        <end position="1801"/>
    </location>
</feature>
<feature type="region of interest" description="Disordered" evidence="7">
    <location>
        <begin position="371"/>
        <end position="401"/>
    </location>
</feature>
<feature type="region of interest" description="Disordered" evidence="7">
    <location>
        <begin position="452"/>
        <end position="518"/>
    </location>
</feature>
<feature type="region of interest" description="Important for interaction with PRKAR2A" evidence="2">
    <location>
        <begin position="493"/>
        <end position="515"/>
    </location>
</feature>
<feature type="region of interest" description="Disordered" evidence="7">
    <location>
        <begin position="547"/>
        <end position="584"/>
    </location>
</feature>
<feature type="region of interest" description="Disordered" evidence="7">
    <location>
        <begin position="618"/>
        <end position="641"/>
    </location>
</feature>
<feature type="region of interest" description="Disordered" evidence="7">
    <location>
        <begin position="653"/>
        <end position="689"/>
    </location>
</feature>
<feature type="region of interest" description="Disordered" evidence="7">
    <location>
        <begin position="760"/>
        <end position="871"/>
    </location>
</feature>
<feature type="region of interest" description="Disordered" evidence="7">
    <location>
        <begin position="910"/>
        <end position="951"/>
    </location>
</feature>
<feature type="region of interest" description="Disordered" evidence="7">
    <location>
        <begin position="995"/>
        <end position="1029"/>
    </location>
</feature>
<feature type="region of interest" description="Disordered" evidence="7">
    <location>
        <begin position="1431"/>
        <end position="1508"/>
    </location>
</feature>
<feature type="region of interest" description="Disordered" evidence="7">
    <location>
        <begin position="1527"/>
        <end position="1546"/>
    </location>
</feature>
<feature type="region of interest" description="Important for interaction with MAP2K3" evidence="2">
    <location>
        <begin position="1552"/>
        <end position="1678"/>
    </location>
</feature>
<feature type="region of interest" description="Disordered" evidence="7">
    <location>
        <begin position="1565"/>
        <end position="1603"/>
    </location>
</feature>
<feature type="region of interest" description="Disordered" evidence="7">
    <location>
        <begin position="1711"/>
        <end position="1756"/>
    </location>
</feature>
<feature type="region of interest" description="Interaction with ESR1" evidence="2">
    <location>
        <begin position="1882"/>
        <end position="2776"/>
    </location>
</feature>
<feature type="region of interest" description="Disordered" evidence="7">
    <location>
        <begin position="2436"/>
        <end position="2471"/>
    </location>
</feature>
<feature type="region of interest" description="Disordered" evidence="7">
    <location>
        <begin position="2549"/>
        <end position="2605"/>
    </location>
</feature>
<feature type="region of interest" description="Disordered" evidence="7">
    <location>
        <begin position="2626"/>
        <end position="2776"/>
    </location>
</feature>
<feature type="coiled-coil region" evidence="3">
    <location>
        <begin position="2308"/>
        <end position="2345"/>
    </location>
</feature>
<feature type="coiled-coil region" evidence="3">
    <location>
        <begin position="2532"/>
        <end position="2646"/>
    </location>
</feature>
<feature type="compositionally biased region" description="Polar residues" evidence="7">
    <location>
        <begin position="389"/>
        <end position="401"/>
    </location>
</feature>
<feature type="compositionally biased region" description="Basic and acidic residues" evidence="7">
    <location>
        <begin position="560"/>
        <end position="573"/>
    </location>
</feature>
<feature type="compositionally biased region" description="Polar residues" evidence="7">
    <location>
        <begin position="659"/>
        <end position="672"/>
    </location>
</feature>
<feature type="compositionally biased region" description="Low complexity" evidence="7">
    <location>
        <begin position="773"/>
        <end position="788"/>
    </location>
</feature>
<feature type="compositionally biased region" description="Basic and acidic residues" evidence="7">
    <location>
        <begin position="820"/>
        <end position="834"/>
    </location>
</feature>
<feature type="compositionally biased region" description="Basic and acidic residues" evidence="7">
    <location>
        <begin position="914"/>
        <end position="940"/>
    </location>
</feature>
<feature type="compositionally biased region" description="Polar residues" evidence="7">
    <location>
        <begin position="1005"/>
        <end position="1020"/>
    </location>
</feature>
<feature type="compositionally biased region" description="Low complexity" evidence="7">
    <location>
        <begin position="1433"/>
        <end position="1444"/>
    </location>
</feature>
<feature type="compositionally biased region" description="Polar residues" evidence="7">
    <location>
        <begin position="1454"/>
        <end position="1476"/>
    </location>
</feature>
<feature type="compositionally biased region" description="Low complexity" evidence="7">
    <location>
        <begin position="1583"/>
        <end position="1594"/>
    </location>
</feature>
<feature type="compositionally biased region" description="Basic and acidic residues" evidence="7">
    <location>
        <begin position="1724"/>
        <end position="1751"/>
    </location>
</feature>
<feature type="compositionally biased region" description="Basic and acidic residues" evidence="7">
    <location>
        <begin position="2455"/>
        <end position="2466"/>
    </location>
</feature>
<feature type="compositionally biased region" description="Basic and acidic residues" evidence="7">
    <location>
        <begin position="2558"/>
        <end position="2605"/>
    </location>
</feature>
<feature type="compositionally biased region" description="Basic and acidic residues" evidence="7">
    <location>
        <begin position="2626"/>
        <end position="2640"/>
    </location>
</feature>
<feature type="compositionally biased region" description="Polar residues" evidence="7">
    <location>
        <begin position="2641"/>
        <end position="2653"/>
    </location>
</feature>
<feature type="compositionally biased region" description="Polar residues" evidence="7">
    <location>
        <begin position="2665"/>
        <end position="2700"/>
    </location>
</feature>
<feature type="compositionally biased region" description="Polar residues" evidence="7">
    <location>
        <begin position="2713"/>
        <end position="2727"/>
    </location>
</feature>
<feature type="modified residue" description="Phosphoserine" evidence="2">
    <location>
        <position position="784"/>
    </location>
</feature>
<feature type="modified residue" description="Phosphothreonine" evidence="2">
    <location>
        <position position="809"/>
    </location>
</feature>
<feature type="modified residue" description="Phosphothreonine" evidence="23">
    <location>
        <position position="941"/>
    </location>
</feature>
<feature type="modified residue" description="Phosphoserine" evidence="2">
    <location>
        <position position="1455"/>
    </location>
</feature>
<feature type="modified residue" description="Phosphoserine" evidence="2">
    <location>
        <position position="1473"/>
    </location>
</feature>
<feature type="modified residue" description="Phosphoserine" evidence="2">
    <location>
        <position position="1507"/>
    </location>
</feature>
<feature type="modified residue" description="Phosphoserine" evidence="2">
    <location>
        <position position="1532"/>
    </location>
</feature>
<feature type="modified residue" description="Phosphoserine" evidence="1">
    <location>
        <position position="1569"/>
    </location>
</feature>
<feature type="modified residue" description="Phosphoserine" evidence="23">
    <location>
        <position position="1608"/>
    </location>
</feature>
<feature type="modified residue" description="Phosphoserine" evidence="23">
    <location>
        <position position="1611"/>
    </location>
</feature>
<feature type="modified residue" description="Phosphoserine" evidence="23">
    <location>
        <position position="1613"/>
    </location>
</feature>
<feature type="modified residue" description="N6-methyllysine" evidence="2">
    <location>
        <position position="1637"/>
    </location>
</feature>
<feature type="modified residue" description="Phosphoserine" evidence="22 23">
    <location>
        <position position="1839"/>
    </location>
</feature>
<feature type="modified residue" description="Phosphoserine" evidence="2">
    <location>
        <position position="1858"/>
    </location>
</feature>
<feature type="modified residue" description="Phosphoserine" evidence="23">
    <location>
        <position position="1892"/>
    </location>
</feature>
<feature type="modified residue" description="Phosphothreonine" evidence="2">
    <location>
        <position position="1893"/>
    </location>
</feature>
<feature type="modified residue" description="Phosphoserine" evidence="23">
    <location>
        <position position="1895"/>
    </location>
</feature>
<feature type="modified residue" description="Phosphoserine" evidence="1">
    <location>
        <position position="1908"/>
    </location>
</feature>
<feature type="modified residue" description="Phosphoserine" evidence="1">
    <location>
        <position position="2308"/>
    </location>
</feature>
<feature type="modified residue" description="Phosphoserine" evidence="23">
    <location>
        <position position="2361"/>
    </location>
</feature>
<feature type="modified residue" description="Phosphothreonine" evidence="2">
    <location>
        <position position="2431"/>
    </location>
</feature>
<feature type="modified residue" description="Phosphoserine" evidence="23">
    <location>
        <position position="2527"/>
    </location>
</feature>
<feature type="modified residue" description="Phosphoserine" evidence="23">
    <location>
        <position position="2530"/>
    </location>
</feature>
<feature type="modified residue" description="Phosphoserine" evidence="2">
    <location>
        <position position="2673"/>
    </location>
</feature>
<feature type="modified residue" description="Phosphoserine" evidence="22 23">
    <location>
        <position position="2692"/>
    </location>
</feature>
<feature type="splice variant" id="VSP_058344" description="In isoform 2.">
    <original>GKQGK</original>
    <variation>E</variation>
    <location>
        <begin position="1307"/>
        <end position="1311"/>
    </location>
</feature>
<feature type="splice variant" id="VSP_058345" description="In isoform 2.">
    <location>
        <begin position="1548"/>
        <end position="1565"/>
    </location>
</feature>
<organism evidence="21">
    <name type="scientific">Mus musculus</name>
    <name type="common">Mouse</name>
    <dbReference type="NCBI Taxonomy" id="10090"/>
    <lineage>
        <taxon>Eukaryota</taxon>
        <taxon>Metazoa</taxon>
        <taxon>Chordata</taxon>
        <taxon>Craniata</taxon>
        <taxon>Vertebrata</taxon>
        <taxon>Euteleostomi</taxon>
        <taxon>Mammalia</taxon>
        <taxon>Eutheria</taxon>
        <taxon>Euarchontoglires</taxon>
        <taxon>Glires</taxon>
        <taxon>Rodentia</taxon>
        <taxon>Myomorpha</taxon>
        <taxon>Muroidea</taxon>
        <taxon>Muridae</taxon>
        <taxon>Murinae</taxon>
        <taxon>Mus</taxon>
        <taxon>Mus</taxon>
    </lineage>
</organism>
<dbReference type="EMBL" id="AC113019">
    <property type="status" value="NOT_ANNOTATED_CDS"/>
    <property type="molecule type" value="Genomic_DNA"/>
</dbReference>
<dbReference type="EMBL" id="AC158749">
    <property type="status" value="NOT_ANNOTATED_CDS"/>
    <property type="molecule type" value="Genomic_DNA"/>
</dbReference>
<dbReference type="EMBL" id="AK149507">
    <property type="protein sequence ID" value="BAE28926.1"/>
    <property type="molecule type" value="mRNA"/>
</dbReference>
<dbReference type="CCDS" id="CCDS52276.1">
    <molecule id="E9Q394-1"/>
</dbReference>
<dbReference type="RefSeq" id="NP_083608.1">
    <molecule id="E9Q394-1"/>
    <property type="nucleotide sequence ID" value="NM_029332.1"/>
</dbReference>
<dbReference type="RefSeq" id="XP_006541318.1">
    <molecule id="E9Q394-2"/>
    <property type="nucleotide sequence ID" value="XM_006541255.5"/>
</dbReference>
<dbReference type="SMR" id="E9Q394"/>
<dbReference type="FunCoup" id="E9Q394">
    <property type="interactions" value="708"/>
</dbReference>
<dbReference type="STRING" id="10090.ENSMUSP00000129784"/>
<dbReference type="GlyGen" id="E9Q394">
    <property type="glycosylation" value="1 site"/>
</dbReference>
<dbReference type="iPTMnet" id="E9Q394"/>
<dbReference type="PhosphoSitePlus" id="E9Q394"/>
<dbReference type="jPOST" id="E9Q394"/>
<dbReference type="PaxDb" id="10090-ENSMUSP00000117686"/>
<dbReference type="PeptideAtlas" id="E9Q394"/>
<dbReference type="ProteomicsDB" id="296158">
    <molecule id="E9Q394-1"/>
</dbReference>
<dbReference type="ProteomicsDB" id="296159">
    <molecule id="E9Q394-2"/>
</dbReference>
<dbReference type="Pumba" id="E9Q394"/>
<dbReference type="Antibodypedia" id="15576">
    <property type="antibodies" value="197 antibodies from 29 providers"/>
</dbReference>
<dbReference type="Ensembl" id="ENSMUST00000166315.7">
    <molecule id="E9Q394-1"/>
    <property type="protein sequence ID" value="ENSMUSP00000129784.2"/>
    <property type="gene ID" value="ENSMUSG00000066406.17"/>
</dbReference>
<dbReference type="GeneID" id="75547"/>
<dbReference type="KEGG" id="mmu:75547"/>
<dbReference type="UCSC" id="uc009hwq.1">
    <property type="organism name" value="mouse"/>
</dbReference>
<dbReference type="UCSC" id="uc009hwx.2">
    <molecule id="E9Q394-1"/>
    <property type="organism name" value="mouse"/>
</dbReference>
<dbReference type="AGR" id="MGI:2676556"/>
<dbReference type="CTD" id="11214"/>
<dbReference type="MGI" id="MGI:2676556">
    <property type="gene designation" value="Akap13"/>
</dbReference>
<dbReference type="VEuPathDB" id="HostDB:ENSMUSG00000066406"/>
<dbReference type="eggNOG" id="KOG3520">
    <property type="taxonomic scope" value="Eukaryota"/>
</dbReference>
<dbReference type="GeneTree" id="ENSGT00940000154146"/>
<dbReference type="InParanoid" id="E9Q394"/>
<dbReference type="OMA" id="NDESMSN"/>
<dbReference type="OrthoDB" id="28045at2759"/>
<dbReference type="Reactome" id="R-MMU-193648">
    <property type="pathway name" value="NRAGE signals death through JNK"/>
</dbReference>
<dbReference type="Reactome" id="R-MMU-416482">
    <property type="pathway name" value="G alpha (12/13) signalling events"/>
</dbReference>
<dbReference type="Reactome" id="R-MMU-8980692">
    <property type="pathway name" value="RHOA GTPase cycle"/>
</dbReference>
<dbReference type="Reactome" id="R-MMU-9013026">
    <property type="pathway name" value="RHOB GTPase cycle"/>
</dbReference>
<dbReference type="Reactome" id="R-MMU-9013106">
    <property type="pathway name" value="RHOC GTPase cycle"/>
</dbReference>
<dbReference type="BioGRID-ORCS" id="75547">
    <property type="hits" value="2 hits in 79 CRISPR screens"/>
</dbReference>
<dbReference type="ChiTaRS" id="Akap13">
    <property type="organism name" value="mouse"/>
</dbReference>
<dbReference type="PRO" id="PR:E9Q394"/>
<dbReference type="Proteomes" id="UP000000589">
    <property type="component" value="Chromosome 7"/>
</dbReference>
<dbReference type="RNAct" id="E9Q394">
    <property type="molecule type" value="protein"/>
</dbReference>
<dbReference type="Bgee" id="ENSMUSG00000066406">
    <property type="expression patterns" value="Expressed in mesenteric lymph node and 223 other cell types or tissues"/>
</dbReference>
<dbReference type="ExpressionAtlas" id="E9Q394">
    <property type="expression patterns" value="baseline and differential"/>
</dbReference>
<dbReference type="GO" id="GO:0005938">
    <property type="term" value="C:cell cortex"/>
    <property type="evidence" value="ECO:0000250"/>
    <property type="project" value="UniProtKB"/>
</dbReference>
<dbReference type="GO" id="GO:0005856">
    <property type="term" value="C:cytoskeleton"/>
    <property type="evidence" value="ECO:0007669"/>
    <property type="project" value="UniProtKB-SubCell"/>
</dbReference>
<dbReference type="GO" id="GO:0005829">
    <property type="term" value="C:cytosol"/>
    <property type="evidence" value="ECO:0000250"/>
    <property type="project" value="UniProtKB"/>
</dbReference>
<dbReference type="GO" id="GO:0016020">
    <property type="term" value="C:membrane"/>
    <property type="evidence" value="ECO:0007669"/>
    <property type="project" value="UniProtKB-SubCell"/>
</dbReference>
<dbReference type="GO" id="GO:0005634">
    <property type="term" value="C:nucleus"/>
    <property type="evidence" value="ECO:0007669"/>
    <property type="project" value="UniProtKB-SubCell"/>
</dbReference>
<dbReference type="GO" id="GO:0005085">
    <property type="term" value="F:guanyl-nucleotide exchange factor activity"/>
    <property type="evidence" value="ECO:0000250"/>
    <property type="project" value="UniProtKB"/>
</dbReference>
<dbReference type="GO" id="GO:0005078">
    <property type="term" value="F:MAP-kinase scaffold activity"/>
    <property type="evidence" value="ECO:0000250"/>
    <property type="project" value="UniProtKB"/>
</dbReference>
<dbReference type="GO" id="GO:0060090">
    <property type="term" value="F:molecular adaptor activity"/>
    <property type="evidence" value="ECO:0000250"/>
    <property type="project" value="UniProtKB"/>
</dbReference>
<dbReference type="GO" id="GO:0008270">
    <property type="term" value="F:zinc ion binding"/>
    <property type="evidence" value="ECO:0007669"/>
    <property type="project" value="UniProtKB-KW"/>
</dbReference>
<dbReference type="GO" id="GO:0071875">
    <property type="term" value="P:adrenergic receptor signaling pathway"/>
    <property type="evidence" value="ECO:0000250"/>
    <property type="project" value="UniProtKB"/>
</dbReference>
<dbReference type="GO" id="GO:0060348">
    <property type="term" value="P:bone development"/>
    <property type="evidence" value="ECO:0000315"/>
    <property type="project" value="UniProtKB"/>
</dbReference>
<dbReference type="GO" id="GO:0055007">
    <property type="term" value="P:cardiac muscle cell differentiation"/>
    <property type="evidence" value="ECO:0000315"/>
    <property type="project" value="UniProtKB"/>
</dbReference>
<dbReference type="GO" id="GO:0007186">
    <property type="term" value="P:G protein-coupled receptor signaling pathway"/>
    <property type="evidence" value="ECO:0000250"/>
    <property type="project" value="UniProtKB"/>
</dbReference>
<dbReference type="GO" id="GO:0007507">
    <property type="term" value="P:heart development"/>
    <property type="evidence" value="ECO:0000315"/>
    <property type="project" value="UniProtKB"/>
</dbReference>
<dbReference type="GO" id="GO:0043123">
    <property type="term" value="P:positive regulation of canonical NF-kappaB signal transduction"/>
    <property type="evidence" value="ECO:0000250"/>
    <property type="project" value="UniProtKB"/>
</dbReference>
<dbReference type="GO" id="GO:0035025">
    <property type="term" value="P:positive regulation of Rho protein signal transduction"/>
    <property type="evidence" value="ECO:0000250"/>
    <property type="project" value="UniProtKB"/>
</dbReference>
<dbReference type="GO" id="GO:2000322">
    <property type="term" value="P:regulation of nuclear receptor-mediated glucocorticoid signaling pathway"/>
    <property type="evidence" value="ECO:0000315"/>
    <property type="project" value="MGI"/>
</dbReference>
<dbReference type="GO" id="GO:0060297">
    <property type="term" value="P:regulation of sarcomere organization"/>
    <property type="evidence" value="ECO:0000315"/>
    <property type="project" value="UniProtKB"/>
</dbReference>
<dbReference type="CDD" id="cd20878">
    <property type="entry name" value="C1_AKAP13"/>
    <property type="match status" value="1"/>
</dbReference>
<dbReference type="CDD" id="cd13392">
    <property type="entry name" value="PH_AKAP13"/>
    <property type="match status" value="1"/>
</dbReference>
<dbReference type="CDD" id="cd00160">
    <property type="entry name" value="RhoGEF"/>
    <property type="match status" value="1"/>
</dbReference>
<dbReference type="FunFam" id="3.30.60.20:FF:000038">
    <property type="entry name" value="A-kinase anchor protein 13 isoform X1"/>
    <property type="match status" value="1"/>
</dbReference>
<dbReference type="FunFam" id="1.20.900.10:FF:000004">
    <property type="entry name" value="Rho guanine nucleotide exchange factor 2"/>
    <property type="match status" value="1"/>
</dbReference>
<dbReference type="FunFam" id="2.30.29.30:FF:000021">
    <property type="entry name" value="Rho guanine nucleotide exchange factor 2"/>
    <property type="match status" value="1"/>
</dbReference>
<dbReference type="Gene3D" id="3.30.60.20">
    <property type="match status" value="1"/>
</dbReference>
<dbReference type="Gene3D" id="1.20.900.10">
    <property type="entry name" value="Dbl homology (DH) domain"/>
    <property type="match status" value="1"/>
</dbReference>
<dbReference type="Gene3D" id="2.30.29.30">
    <property type="entry name" value="Pleckstrin-homology domain (PH domain)/Phosphotyrosine-binding domain (PTB)"/>
    <property type="match status" value="1"/>
</dbReference>
<dbReference type="InterPro" id="IPR046349">
    <property type="entry name" value="C1-like_sf"/>
</dbReference>
<dbReference type="InterPro" id="IPR035899">
    <property type="entry name" value="DBL_dom_sf"/>
</dbReference>
<dbReference type="InterPro" id="IPR000219">
    <property type="entry name" value="DH_dom"/>
</dbReference>
<dbReference type="InterPro" id="IPR002219">
    <property type="entry name" value="PE/DAG-bd"/>
</dbReference>
<dbReference type="InterPro" id="IPR011993">
    <property type="entry name" value="PH-like_dom_sf"/>
</dbReference>
<dbReference type="InterPro" id="IPR041020">
    <property type="entry name" value="PH_16"/>
</dbReference>
<dbReference type="InterPro" id="IPR001849">
    <property type="entry name" value="PH_domain"/>
</dbReference>
<dbReference type="InterPro" id="IPR051632">
    <property type="entry name" value="Rho_GEF"/>
</dbReference>
<dbReference type="PANTHER" id="PTHR13944:SF18">
    <property type="entry name" value="A-KINASE ANCHOR PROTEIN 13"/>
    <property type="match status" value="1"/>
</dbReference>
<dbReference type="PANTHER" id="PTHR13944">
    <property type="entry name" value="AGAP007712-PA"/>
    <property type="match status" value="1"/>
</dbReference>
<dbReference type="Pfam" id="PF17838">
    <property type="entry name" value="PH_16"/>
    <property type="match status" value="1"/>
</dbReference>
<dbReference type="Pfam" id="PF00621">
    <property type="entry name" value="RhoGEF"/>
    <property type="match status" value="1"/>
</dbReference>
<dbReference type="SMART" id="SM00109">
    <property type="entry name" value="C1"/>
    <property type="match status" value="1"/>
</dbReference>
<dbReference type="SMART" id="SM00233">
    <property type="entry name" value="PH"/>
    <property type="match status" value="1"/>
</dbReference>
<dbReference type="SMART" id="SM00325">
    <property type="entry name" value="RhoGEF"/>
    <property type="match status" value="1"/>
</dbReference>
<dbReference type="SUPFAM" id="SSF57889">
    <property type="entry name" value="Cysteine-rich domain"/>
    <property type="match status" value="1"/>
</dbReference>
<dbReference type="SUPFAM" id="SSF48065">
    <property type="entry name" value="DBL homology domain (DH-domain)"/>
    <property type="match status" value="1"/>
</dbReference>
<dbReference type="SUPFAM" id="SSF50729">
    <property type="entry name" value="PH domain-like"/>
    <property type="match status" value="1"/>
</dbReference>
<dbReference type="PROSITE" id="PS50010">
    <property type="entry name" value="DH_2"/>
    <property type="match status" value="1"/>
</dbReference>
<dbReference type="PROSITE" id="PS50003">
    <property type="entry name" value="PH_DOMAIN"/>
    <property type="match status" value="1"/>
</dbReference>
<dbReference type="PROSITE" id="PS00479">
    <property type="entry name" value="ZF_DAG_PE_1"/>
    <property type="match status" value="1"/>
</dbReference>
<dbReference type="PROSITE" id="PS50081">
    <property type="entry name" value="ZF_DAG_PE_2"/>
    <property type="match status" value="1"/>
</dbReference>
<proteinExistence type="evidence at protein level"/>
<keyword id="KW-0025">Alternative splicing</keyword>
<keyword id="KW-0175">Coiled coil</keyword>
<keyword id="KW-0963">Cytoplasm</keyword>
<keyword id="KW-0206">Cytoskeleton</keyword>
<keyword id="KW-0344">Guanine-nucleotide releasing factor</keyword>
<keyword id="KW-0472">Membrane</keyword>
<keyword id="KW-0479">Metal-binding</keyword>
<keyword id="KW-0488">Methylation</keyword>
<keyword id="KW-0539">Nucleus</keyword>
<keyword id="KW-0597">Phosphoprotein</keyword>
<keyword id="KW-1185">Reference proteome</keyword>
<keyword id="KW-0862">Zinc</keyword>
<keyword id="KW-0863">Zinc-finger</keyword>
<accession>E9Q394</accession>
<accession>Q3UEI5</accession>